<organism>
    <name type="scientific">Rhodella violacea</name>
    <name type="common">Red alga</name>
    <dbReference type="NCBI Taxonomy" id="2801"/>
    <lineage>
        <taxon>Eukaryota</taxon>
        <taxon>Rhodophyta</taxon>
        <taxon>Rhodellophyceae</taxon>
        <taxon>Rhodellales</taxon>
        <taxon>Rhodellaceae</taxon>
        <taxon>Rhodella</taxon>
    </lineage>
</organism>
<geneLocation type="chloroplast"/>
<protein>
    <recommendedName>
        <fullName>C-phycocyanin alpha chain</fullName>
    </recommendedName>
</protein>
<evidence type="ECO:0000250" key="1"/>
<evidence type="ECO:0000250" key="2">
    <source>
        <dbReference type="UniProtKB" id="P00306"/>
    </source>
</evidence>
<evidence type="ECO:0000305" key="3"/>
<gene>
    <name type="primary">cpcA</name>
</gene>
<proteinExistence type="inferred from homology"/>
<accession>Q36699</accession>
<reference key="1">
    <citation type="online journal article" date="1995" name="Plant Gene Register">
        <title>Cloning and sequence analysis of the genes encoding the a and b subunits of C-phycocyanin from the red alga Rhodella violacea.</title>
        <authorList>
            <person name="Garnier F."/>
            <person name="Richaud C."/>
            <person name="Bernard C."/>
        </authorList>
        <locator>PGR95-101</locator>
    </citation>
    <scope>NUCLEOTIDE SEQUENCE [GENOMIC DNA]</scope>
</reference>
<sequence>MKTPITESIASADSQGRFLTTTELQSVNGRYQRAAASLAAARALTNNAQSLITSAAQAVYSKFPYTTQMPGPAYASSAVGKAKCARDIGYYLRMVTYCLVVGGTGPMDEYLVAGLEEINRSFDLSPSWYVEALSYIKGNHGLKGQSATEANSYLDYAINVLS</sequence>
<name>PHCA_RHOVL</name>
<keyword id="KW-0042">Antenna complex</keyword>
<keyword id="KW-0089">Bile pigment</keyword>
<keyword id="KW-0150">Chloroplast</keyword>
<keyword id="KW-0157">Chromophore</keyword>
<keyword id="KW-0249">Electron transport</keyword>
<keyword id="KW-0472">Membrane</keyword>
<keyword id="KW-0602">Photosynthesis</keyword>
<keyword id="KW-0605">Phycobilisome</keyword>
<keyword id="KW-0934">Plastid</keyword>
<keyword id="KW-0793">Thylakoid</keyword>
<keyword id="KW-0813">Transport</keyword>
<comment type="function">
    <text>Light-harvesting photosynthetic bile pigment-protein from the phycobiliprotein complex (phycobilisome, PBS). Phycocyanin is the major phycobiliprotein in the PBS rod.</text>
</comment>
<comment type="subunit">
    <text evidence="2">Heterodimer of an alpha and a beta subunit, which further assembles into trimers and the trimers into hexamers. The basic functional unit of phycobiliproteins is a ring-shaped hexamer formed from two back-to-back trimers contacting via the alpha chain subunits. The trimers are composed of alpha/beta subunit heterodimers arranged around a three-fold axis of symmetry. The phycoerythrins also contain a gamma subunit which is located in the center of the hexamer.</text>
</comment>
<comment type="subcellular location">
    <subcellularLocation>
        <location evidence="1">Plastid</location>
        <location evidence="1">Chloroplast thylakoid membrane</location>
        <topology evidence="1">Peripheral membrane protein</topology>
        <orientation evidence="1">Stromal side</orientation>
    </subcellularLocation>
    <text evidence="1">Part of the phycobilisome rod.</text>
</comment>
<comment type="PTM">
    <text evidence="2">Contains one covalently linked phycocyanobilin chromophore.</text>
</comment>
<comment type="similarity">
    <text evidence="3">Belongs to the phycobiliprotein family.</text>
</comment>
<dbReference type="EMBL" id="Z48165">
    <property type="protein sequence ID" value="CAA88178.1"/>
    <property type="molecule type" value="Genomic_DNA"/>
</dbReference>
<dbReference type="RefSeq" id="YP_010330395.1">
    <property type="nucleotide sequence ID" value="NC_062301.1"/>
</dbReference>
<dbReference type="SMR" id="Q36699"/>
<dbReference type="GeneID" id="71712858"/>
<dbReference type="GO" id="GO:0009535">
    <property type="term" value="C:chloroplast thylakoid membrane"/>
    <property type="evidence" value="ECO:0007669"/>
    <property type="project" value="UniProtKB-SubCell"/>
</dbReference>
<dbReference type="GO" id="GO:0030089">
    <property type="term" value="C:phycobilisome"/>
    <property type="evidence" value="ECO:0007669"/>
    <property type="project" value="UniProtKB-KW"/>
</dbReference>
<dbReference type="GO" id="GO:0015979">
    <property type="term" value="P:photosynthesis"/>
    <property type="evidence" value="ECO:0007669"/>
    <property type="project" value="UniProtKB-KW"/>
</dbReference>
<dbReference type="Gene3D" id="1.10.490.20">
    <property type="entry name" value="Phycocyanins"/>
    <property type="match status" value="1"/>
</dbReference>
<dbReference type="InterPro" id="IPR009050">
    <property type="entry name" value="Globin-like_sf"/>
</dbReference>
<dbReference type="InterPro" id="IPR012128">
    <property type="entry name" value="Phycobilisome_asu/bsu"/>
</dbReference>
<dbReference type="InterPro" id="IPR038719">
    <property type="entry name" value="Phycobilisome_asu/bsu_sf"/>
</dbReference>
<dbReference type="InterPro" id="IPR006246">
    <property type="entry name" value="Phycocyanin_a"/>
</dbReference>
<dbReference type="NCBIfam" id="TIGR01338">
    <property type="entry name" value="phycocy_alpha"/>
    <property type="match status" value="1"/>
</dbReference>
<dbReference type="PANTHER" id="PTHR34011:SF4">
    <property type="entry name" value="C-PHYCOCYANIN ALPHA SUBUNIT"/>
    <property type="match status" value="1"/>
</dbReference>
<dbReference type="PANTHER" id="PTHR34011">
    <property type="entry name" value="PHYCOBILISOME 32.1 KDA LINKER POLYPEPTIDE, PHYCOCYANIN-ASSOCIATED, ROD 2-RELATED"/>
    <property type="match status" value="1"/>
</dbReference>
<dbReference type="Pfam" id="PF00502">
    <property type="entry name" value="Phycobilisome"/>
    <property type="match status" value="1"/>
</dbReference>
<dbReference type="PIRSF" id="PIRSF000081">
    <property type="entry name" value="Phycocyanin"/>
    <property type="match status" value="1"/>
</dbReference>
<dbReference type="SUPFAM" id="SSF46458">
    <property type="entry name" value="Globin-like"/>
    <property type="match status" value="1"/>
</dbReference>
<feature type="chain" id="PRO_0000199126" description="C-phycocyanin alpha chain">
    <location>
        <begin position="1"/>
        <end position="162"/>
    </location>
</feature>
<feature type="binding site" description="covalent" evidence="2">
    <location>
        <position position="84"/>
    </location>
    <ligand>
        <name>(2R,3E)-phycocyanobilin</name>
        <dbReference type="ChEBI" id="CHEBI:85275"/>
    </ligand>
</feature>